<organism>
    <name type="scientific">Ruegeria pomeroyi (strain ATCC 700808 / DSM 15171 / DSS-3)</name>
    <name type="common">Silicibacter pomeroyi</name>
    <dbReference type="NCBI Taxonomy" id="246200"/>
    <lineage>
        <taxon>Bacteria</taxon>
        <taxon>Pseudomonadati</taxon>
        <taxon>Pseudomonadota</taxon>
        <taxon>Alphaproteobacteria</taxon>
        <taxon>Rhodobacterales</taxon>
        <taxon>Roseobacteraceae</taxon>
        <taxon>Ruegeria</taxon>
    </lineage>
</organism>
<keyword id="KW-0067">ATP-binding</keyword>
<keyword id="KW-0997">Cell inner membrane</keyword>
<keyword id="KW-1003">Cell membrane</keyword>
<keyword id="KW-0406">Ion transport</keyword>
<keyword id="KW-0472">Membrane</keyword>
<keyword id="KW-0547">Nucleotide-binding</keyword>
<keyword id="KW-1185">Reference proteome</keyword>
<keyword id="KW-1278">Translocase</keyword>
<keyword id="KW-0813">Transport</keyword>
<keyword id="KW-0862">Zinc</keyword>
<keyword id="KW-0864">Zinc transport</keyword>
<comment type="function">
    <text evidence="1">Part of the ABC transporter complex ZnuABC involved in zinc import. Responsible for energy coupling to the transport system.</text>
</comment>
<comment type="catalytic activity">
    <reaction evidence="1">
        <text>Zn(2+)(out) + ATP(in) + H2O(in) = Zn(2+)(in) + ADP(in) + phosphate(in) + H(+)(in)</text>
        <dbReference type="Rhea" id="RHEA:29795"/>
        <dbReference type="ChEBI" id="CHEBI:15377"/>
        <dbReference type="ChEBI" id="CHEBI:15378"/>
        <dbReference type="ChEBI" id="CHEBI:29105"/>
        <dbReference type="ChEBI" id="CHEBI:30616"/>
        <dbReference type="ChEBI" id="CHEBI:43474"/>
        <dbReference type="ChEBI" id="CHEBI:456216"/>
        <dbReference type="EC" id="7.2.2.20"/>
    </reaction>
</comment>
<comment type="subunit">
    <text evidence="1">The complex is composed of two ATP-binding proteins (ZnuC), two transmembrane proteins (ZnuB) and a solute-binding protein (ZnuA).</text>
</comment>
<comment type="subcellular location">
    <subcellularLocation>
        <location evidence="1">Cell inner membrane</location>
        <topology evidence="1">Peripheral membrane protein</topology>
    </subcellularLocation>
</comment>
<comment type="similarity">
    <text evidence="1">Belongs to the ABC transporter superfamily. Zinc importer (TC 3.A.1.15.5) family.</text>
</comment>
<dbReference type="EC" id="7.2.2.20" evidence="1"/>
<dbReference type="EMBL" id="CP000031">
    <property type="protein sequence ID" value="AAV94289.1"/>
    <property type="molecule type" value="Genomic_DNA"/>
</dbReference>
<dbReference type="RefSeq" id="WP_011046733.1">
    <property type="nucleotide sequence ID" value="NC_003911.12"/>
</dbReference>
<dbReference type="SMR" id="Q5LUR8"/>
<dbReference type="STRING" id="246200.SPO0985"/>
<dbReference type="PaxDb" id="246200-SPO0985"/>
<dbReference type="KEGG" id="sil:SPO0985"/>
<dbReference type="eggNOG" id="COG1121">
    <property type="taxonomic scope" value="Bacteria"/>
</dbReference>
<dbReference type="HOGENOM" id="CLU_000604_1_11_5"/>
<dbReference type="OrthoDB" id="9806726at2"/>
<dbReference type="Proteomes" id="UP000001023">
    <property type="component" value="Chromosome"/>
</dbReference>
<dbReference type="GO" id="GO:0005886">
    <property type="term" value="C:plasma membrane"/>
    <property type="evidence" value="ECO:0007669"/>
    <property type="project" value="UniProtKB-SubCell"/>
</dbReference>
<dbReference type="GO" id="GO:0015633">
    <property type="term" value="F:ABC-type zinc transporter activity"/>
    <property type="evidence" value="ECO:0007669"/>
    <property type="project" value="UniProtKB-EC"/>
</dbReference>
<dbReference type="GO" id="GO:0005524">
    <property type="term" value="F:ATP binding"/>
    <property type="evidence" value="ECO:0007669"/>
    <property type="project" value="UniProtKB-KW"/>
</dbReference>
<dbReference type="GO" id="GO:0016887">
    <property type="term" value="F:ATP hydrolysis activity"/>
    <property type="evidence" value="ECO:0007669"/>
    <property type="project" value="InterPro"/>
</dbReference>
<dbReference type="GO" id="GO:0010043">
    <property type="term" value="P:response to zinc ion"/>
    <property type="evidence" value="ECO:0007669"/>
    <property type="project" value="TreeGrafter"/>
</dbReference>
<dbReference type="Gene3D" id="3.40.50.300">
    <property type="entry name" value="P-loop containing nucleotide triphosphate hydrolases"/>
    <property type="match status" value="1"/>
</dbReference>
<dbReference type="InterPro" id="IPR003593">
    <property type="entry name" value="AAA+_ATPase"/>
</dbReference>
<dbReference type="InterPro" id="IPR003439">
    <property type="entry name" value="ABC_transporter-like_ATP-bd"/>
</dbReference>
<dbReference type="InterPro" id="IPR017871">
    <property type="entry name" value="ABC_transporter-like_CS"/>
</dbReference>
<dbReference type="InterPro" id="IPR050153">
    <property type="entry name" value="Metal_Ion_Import_ABC"/>
</dbReference>
<dbReference type="InterPro" id="IPR027417">
    <property type="entry name" value="P-loop_NTPase"/>
</dbReference>
<dbReference type="PANTHER" id="PTHR42734">
    <property type="entry name" value="METAL TRANSPORT SYSTEM ATP-BINDING PROTEIN TM_0124-RELATED"/>
    <property type="match status" value="1"/>
</dbReference>
<dbReference type="PANTHER" id="PTHR42734:SF9">
    <property type="entry name" value="ZINC IMPORT ATP-BINDING PROTEIN ZNUC"/>
    <property type="match status" value="1"/>
</dbReference>
<dbReference type="Pfam" id="PF00005">
    <property type="entry name" value="ABC_tran"/>
    <property type="match status" value="1"/>
</dbReference>
<dbReference type="SMART" id="SM00382">
    <property type="entry name" value="AAA"/>
    <property type="match status" value="1"/>
</dbReference>
<dbReference type="SUPFAM" id="SSF52540">
    <property type="entry name" value="P-loop containing nucleoside triphosphate hydrolases"/>
    <property type="match status" value="1"/>
</dbReference>
<dbReference type="PROSITE" id="PS00211">
    <property type="entry name" value="ABC_TRANSPORTER_1"/>
    <property type="match status" value="1"/>
</dbReference>
<dbReference type="PROSITE" id="PS50893">
    <property type="entry name" value="ABC_TRANSPORTER_2"/>
    <property type="match status" value="1"/>
</dbReference>
<dbReference type="PROSITE" id="PS51298">
    <property type="entry name" value="ZNUC"/>
    <property type="match status" value="1"/>
</dbReference>
<sequence>MNTPVIAAEGLSIRVDGRTVLADISVAVAAGEIVTIVGPNGSGKSTFLRALIGALPAASGRVIRAPGLRIGYVPQKLAIDATLPITVSRFLSLPRRVPQDVAAEALARAGVPDLANRQMTDLSGGQFQRVLLARAVLERPHLLLLDEATQGLDQPGSAAFYEQIEEVRQDLGCAVVMVSHDLHVVMAASDRVLCMNGHICCEGTPEVVADAPEYRALFGTGTRGALALYRHQHSHRHDDDCGHDHGAEHMHPHGDR</sequence>
<accession>Q5LUR8</accession>
<name>ZNUC_RUEPO</name>
<feature type="chain" id="PRO_0000281555" description="Zinc import ATP-binding protein ZnuC">
    <location>
        <begin position="1"/>
        <end position="256"/>
    </location>
</feature>
<feature type="domain" description="ABC transporter" evidence="1">
    <location>
        <begin position="6"/>
        <end position="221"/>
    </location>
</feature>
<feature type="region of interest" description="Disordered" evidence="2">
    <location>
        <begin position="237"/>
        <end position="256"/>
    </location>
</feature>
<feature type="binding site" evidence="1">
    <location>
        <begin position="38"/>
        <end position="45"/>
    </location>
    <ligand>
        <name>ATP</name>
        <dbReference type="ChEBI" id="CHEBI:30616"/>
    </ligand>
</feature>
<proteinExistence type="inferred from homology"/>
<evidence type="ECO:0000255" key="1">
    <source>
        <dbReference type="HAMAP-Rule" id="MF_01725"/>
    </source>
</evidence>
<evidence type="ECO:0000256" key="2">
    <source>
        <dbReference type="SAM" id="MobiDB-lite"/>
    </source>
</evidence>
<protein>
    <recommendedName>
        <fullName evidence="1">Zinc import ATP-binding protein ZnuC</fullName>
        <ecNumber evidence="1">7.2.2.20</ecNumber>
    </recommendedName>
</protein>
<gene>
    <name evidence="1" type="primary">znuC</name>
    <name type="ordered locus">SPO0985</name>
</gene>
<reference key="1">
    <citation type="journal article" date="2004" name="Nature">
        <title>Genome sequence of Silicibacter pomeroyi reveals adaptations to the marine environment.</title>
        <authorList>
            <person name="Moran M.A."/>
            <person name="Buchan A."/>
            <person name="Gonzalez J.M."/>
            <person name="Heidelberg J.F."/>
            <person name="Whitman W.B."/>
            <person name="Kiene R.P."/>
            <person name="Henriksen J.R."/>
            <person name="King G.M."/>
            <person name="Belas R."/>
            <person name="Fuqua C."/>
            <person name="Brinkac L.M."/>
            <person name="Lewis M."/>
            <person name="Johri S."/>
            <person name="Weaver B."/>
            <person name="Pai G."/>
            <person name="Eisen J.A."/>
            <person name="Rahe E."/>
            <person name="Sheldon W.M."/>
            <person name="Ye W."/>
            <person name="Miller T.R."/>
            <person name="Carlton J."/>
            <person name="Rasko D.A."/>
            <person name="Paulsen I.T."/>
            <person name="Ren Q."/>
            <person name="Daugherty S.C."/>
            <person name="DeBoy R.T."/>
            <person name="Dodson R.J."/>
            <person name="Durkin A.S."/>
            <person name="Madupu R."/>
            <person name="Nelson W.C."/>
            <person name="Sullivan S.A."/>
            <person name="Rosovitz M.J."/>
            <person name="Haft D.H."/>
            <person name="Selengut J."/>
            <person name="Ward N."/>
        </authorList>
    </citation>
    <scope>NUCLEOTIDE SEQUENCE [LARGE SCALE GENOMIC DNA]</scope>
    <source>
        <strain>ATCC 700808 / DSM 15171 / DSS-3</strain>
    </source>
</reference>
<reference key="2">
    <citation type="journal article" date="2014" name="Stand. Genomic Sci.">
        <title>An updated genome annotation for the model marine bacterium Ruegeria pomeroyi DSS-3.</title>
        <authorList>
            <person name="Rivers A.R."/>
            <person name="Smith C.B."/>
            <person name="Moran M.A."/>
        </authorList>
    </citation>
    <scope>GENOME REANNOTATION</scope>
    <source>
        <strain>ATCC 700808 / DSM 15171 / DSS-3</strain>
    </source>
</reference>